<dbReference type="EC" id="3.1.3.5" evidence="2"/>
<dbReference type="EC" id="3.1.3.91" evidence="2"/>
<dbReference type="EMBL" id="AF548635">
    <property type="protein sequence ID" value="AAQ12342.1"/>
    <property type="molecule type" value="mRNA"/>
</dbReference>
<dbReference type="EMBL" id="AJ496195">
    <property type="protein sequence ID" value="CAD42712.1"/>
    <property type="molecule type" value="mRNA"/>
</dbReference>
<dbReference type="EMBL" id="AJ720848">
    <property type="protein sequence ID" value="CAG32507.1"/>
    <property type="molecule type" value="mRNA"/>
</dbReference>
<dbReference type="RefSeq" id="NP_989767.1">
    <molecule id="Q5ZID6-1"/>
    <property type="nucleotide sequence ID" value="NM_204436.3"/>
</dbReference>
<dbReference type="RefSeq" id="XP_015136753.1">
    <molecule id="Q5ZID6-3"/>
    <property type="nucleotide sequence ID" value="XM_015281267.4"/>
</dbReference>
<dbReference type="RefSeq" id="XP_015136759.1">
    <property type="nucleotide sequence ID" value="XM_015281273.1"/>
</dbReference>
<dbReference type="RefSeq" id="XP_046766189.1">
    <molecule id="Q5ZID6-3"/>
    <property type="nucleotide sequence ID" value="XM_046910233.1"/>
</dbReference>
<dbReference type="RefSeq" id="XP_046766199.1">
    <molecule id="Q5ZID6-1"/>
    <property type="nucleotide sequence ID" value="XM_046910243.1"/>
</dbReference>
<dbReference type="RefSeq" id="XP_046766200.1">
    <molecule id="Q5ZID6-1"/>
    <property type="nucleotide sequence ID" value="XM_046910244.1"/>
</dbReference>
<dbReference type="RefSeq" id="XP_046773437.1">
    <molecule id="Q5ZID6-1"/>
    <property type="nucleotide sequence ID" value="XM_046917481.1"/>
</dbReference>
<dbReference type="RefSeq" id="XP_046773438.1">
    <molecule id="Q5ZID6-1"/>
    <property type="nucleotide sequence ID" value="XM_046917482.1"/>
</dbReference>
<dbReference type="SMR" id="Q5ZID6"/>
<dbReference type="FunCoup" id="Q5ZID6">
    <property type="interactions" value="605"/>
</dbReference>
<dbReference type="STRING" id="9031.ENSGALP00000054083"/>
<dbReference type="PaxDb" id="9031-ENSGALP00000019881"/>
<dbReference type="Ensembl" id="ENSGALT00010046624.1">
    <molecule id="Q5ZID6-1"/>
    <property type="protein sequence ID" value="ENSGALP00010027767.1"/>
    <property type="gene ID" value="ENSGALG00010019283.1"/>
</dbReference>
<dbReference type="Ensembl" id="ENSGALT00010046631.1">
    <molecule id="Q5ZID6-3"/>
    <property type="protein sequence ID" value="ENSGALP00010027774.1"/>
    <property type="gene ID" value="ENSGALG00010019283.1"/>
</dbReference>
<dbReference type="GeneID" id="395080"/>
<dbReference type="KEGG" id="gga:395080"/>
<dbReference type="CTD" id="51251"/>
<dbReference type="VEuPathDB" id="HostDB:geneid_395080"/>
<dbReference type="eggNOG" id="KOG3128">
    <property type="taxonomic scope" value="Eukaryota"/>
</dbReference>
<dbReference type="GeneTree" id="ENSGT00390000012959"/>
<dbReference type="HOGENOM" id="CLU_048584_0_2_1"/>
<dbReference type="InParanoid" id="Q5ZID6"/>
<dbReference type="OMA" id="GPERMQI"/>
<dbReference type="OrthoDB" id="10014216at2759"/>
<dbReference type="PhylomeDB" id="Q5ZID6"/>
<dbReference type="TreeFam" id="TF314663"/>
<dbReference type="Reactome" id="R-GGA-73621">
    <property type="pathway name" value="Pyrimidine catabolism"/>
</dbReference>
<dbReference type="PRO" id="PR:Q5ZID6"/>
<dbReference type="Proteomes" id="UP000000539">
    <property type="component" value="Chromosome 2"/>
</dbReference>
<dbReference type="Bgee" id="ENSGALG00000031397">
    <property type="expression patterns" value="Expressed in kidney and 13 other cell types or tissues"/>
</dbReference>
<dbReference type="GO" id="GO:0005737">
    <property type="term" value="C:cytoplasm"/>
    <property type="evidence" value="ECO:0000250"/>
    <property type="project" value="UniProtKB"/>
</dbReference>
<dbReference type="GO" id="GO:0005829">
    <property type="term" value="C:cytosol"/>
    <property type="evidence" value="ECO:0007669"/>
    <property type="project" value="Ensembl"/>
</dbReference>
<dbReference type="GO" id="GO:0005783">
    <property type="term" value="C:endoplasmic reticulum"/>
    <property type="evidence" value="ECO:0000250"/>
    <property type="project" value="UniProtKB"/>
</dbReference>
<dbReference type="GO" id="GO:0016604">
    <property type="term" value="C:nuclear body"/>
    <property type="evidence" value="ECO:0007669"/>
    <property type="project" value="Ensembl"/>
</dbReference>
<dbReference type="GO" id="GO:0008253">
    <property type="term" value="F:5'-nucleotidase activity"/>
    <property type="evidence" value="ECO:0000250"/>
    <property type="project" value="UniProtKB"/>
</dbReference>
<dbReference type="GO" id="GO:0000287">
    <property type="term" value="F:magnesium ion binding"/>
    <property type="evidence" value="ECO:0007669"/>
    <property type="project" value="InterPro"/>
</dbReference>
<dbReference type="GO" id="GO:0000166">
    <property type="term" value="F:nucleotide binding"/>
    <property type="evidence" value="ECO:0007669"/>
    <property type="project" value="UniProtKB-KW"/>
</dbReference>
<dbReference type="GO" id="GO:0016740">
    <property type="term" value="F:transferase activity"/>
    <property type="evidence" value="ECO:0007669"/>
    <property type="project" value="UniProtKB-KW"/>
</dbReference>
<dbReference type="GO" id="GO:0006248">
    <property type="term" value="P:CMP catabolic process"/>
    <property type="evidence" value="ECO:0007669"/>
    <property type="project" value="Ensembl"/>
</dbReference>
<dbReference type="CDD" id="cd07504">
    <property type="entry name" value="HAD_5NT"/>
    <property type="match status" value="1"/>
</dbReference>
<dbReference type="FunFam" id="1.10.150.340:FF:000001">
    <property type="entry name" value="Cytosolic 5-nucleotidase 3-like"/>
    <property type="match status" value="1"/>
</dbReference>
<dbReference type="FunFam" id="3.40.50.1000:FF:000032">
    <property type="entry name" value="Cytosolic 5-nucleotidase 3-like"/>
    <property type="match status" value="1"/>
</dbReference>
<dbReference type="Gene3D" id="3.40.50.1000">
    <property type="entry name" value="HAD superfamily/HAD-like"/>
    <property type="match status" value="1"/>
</dbReference>
<dbReference type="Gene3D" id="1.10.150.340">
    <property type="entry name" value="Pyrimidine 5'-nucleotidase (UMPH-1), N-terminal domain"/>
    <property type="match status" value="1"/>
</dbReference>
<dbReference type="InterPro" id="IPR036412">
    <property type="entry name" value="HAD-like_sf"/>
</dbReference>
<dbReference type="InterPro" id="IPR023214">
    <property type="entry name" value="HAD_sf"/>
</dbReference>
<dbReference type="InterPro" id="IPR006434">
    <property type="entry name" value="Pyrimidine_nucleotidase_eu"/>
</dbReference>
<dbReference type="NCBIfam" id="TIGR01544">
    <property type="entry name" value="HAD-SF-IE"/>
    <property type="match status" value="1"/>
</dbReference>
<dbReference type="PANTHER" id="PTHR13045">
    <property type="entry name" value="5'-NUCLEOTIDASE"/>
    <property type="match status" value="1"/>
</dbReference>
<dbReference type="PANTHER" id="PTHR13045:SF14">
    <property type="entry name" value="CYTOSOLIC 5'-NUCLEOTIDASE 3A"/>
    <property type="match status" value="1"/>
</dbReference>
<dbReference type="Pfam" id="PF05822">
    <property type="entry name" value="UMPH-1"/>
    <property type="match status" value="1"/>
</dbReference>
<dbReference type="SFLD" id="SFLDG01128">
    <property type="entry name" value="C1.4:_5'-Nucleotidase_Like"/>
    <property type="match status" value="1"/>
</dbReference>
<dbReference type="SFLD" id="SFLDS00003">
    <property type="entry name" value="Haloacid_Dehalogenase"/>
    <property type="match status" value="1"/>
</dbReference>
<dbReference type="SUPFAM" id="SSF56784">
    <property type="entry name" value="HAD-like"/>
    <property type="match status" value="1"/>
</dbReference>
<accession>Q5ZID6</accession>
<accession>Q802T3</accession>
<comment type="function">
    <text evidence="2">Nucleotidase which shows specific activity towards cytidine monophosphate (CMP) and 7-methylguanosine monophosphate (m(7)GMP). CMP seems to be the preferred substrate.</text>
</comment>
<comment type="catalytic activity">
    <reaction evidence="2">
        <text>N(7)-methyl-GMP + H2O = N(7)-methylguanosine + phosphate</text>
        <dbReference type="Rhea" id="RHEA:37107"/>
        <dbReference type="ChEBI" id="CHEBI:15377"/>
        <dbReference type="ChEBI" id="CHEBI:20794"/>
        <dbReference type="ChEBI" id="CHEBI:43474"/>
        <dbReference type="ChEBI" id="CHEBI:58285"/>
        <dbReference type="EC" id="3.1.3.91"/>
    </reaction>
</comment>
<comment type="catalytic activity">
    <reaction evidence="1">
        <text>a ribonucleoside 5'-phosphate + H2O = a ribonucleoside + phosphate</text>
        <dbReference type="Rhea" id="RHEA:12484"/>
        <dbReference type="ChEBI" id="CHEBI:15377"/>
        <dbReference type="ChEBI" id="CHEBI:18254"/>
        <dbReference type="ChEBI" id="CHEBI:43474"/>
        <dbReference type="ChEBI" id="CHEBI:58043"/>
        <dbReference type="EC" id="3.1.3.5"/>
    </reaction>
</comment>
<comment type="subcellular location">
    <subcellularLocation>
        <location evidence="7">Cytoplasm</location>
    </subcellularLocation>
</comment>
<comment type="alternative products">
    <event type="alternative splicing"/>
    <isoform>
        <id>Q5ZID6-3</id>
        <name>2</name>
        <sequence type="displayed"/>
    </isoform>
    <isoform>
        <id>Q5ZID6-1</id>
        <name>1</name>
        <sequence type="described" ref="VSP_021564"/>
    </isoform>
</comment>
<comment type="developmental stage">
    <text evidence="4">Expressed at low levels until 13 dpc and the expression rises transiently between 13 dpc and 16 dpc.</text>
</comment>
<comment type="induction">
    <text evidence="4">By norepinephrine/NE and adenosine which are released by the embryo under hypoxic conditions. By stimulation of beta-adrenergic/adenosine receptors in definitive red blood cells (RBC).</text>
</comment>
<comment type="similarity">
    <text evidence="7">Belongs to the pyrimidine 5'-nucleotidase family.</text>
</comment>
<gene>
    <name type="primary">NT5C3A</name>
    <name type="synonym">NT5C3</name>
    <name type="synonym">PYN1</name>
    <name type="ORF">RCJMB04_27l2</name>
</gene>
<proteinExistence type="evidence at protein level"/>
<reference key="1">
    <citation type="journal article" date="2003" name="Blood">
        <title>Erythroid pyrimidine 5'-nucleotidase: cloning, developmental expression, and regulation by cAMP and in vivo hypoxia.</title>
        <authorList>
            <person name="Mass M."/>
            <person name="Simo E."/>
            <person name="Dragon S."/>
        </authorList>
    </citation>
    <scope>NUCLEOTIDE SEQUENCE [MRNA] (ISOFORM 1)</scope>
    <scope>PROTEIN SEQUENCE OF 46-85; 150-158; 220-243 AND 291-290</scope>
    <scope>DEVELOPMENTAL STAGE</scope>
    <scope>INDUCTION</scope>
    <source>
        <tissue>Erythrocyte</tissue>
    </source>
</reference>
<reference key="2">
    <citation type="submission" date="2002-07" db="EMBL/GenBank/DDBJ databases">
        <title>Cloning and gene expression of pyrimidine 5'-nucleotidase in chick embryonic erythrocytes.</title>
        <authorList>
            <person name="Mass M."/>
            <person name="Dragon S."/>
        </authorList>
    </citation>
    <scope>NUCLEOTIDE SEQUENCE [MRNA] (ISOFORM 1)</scope>
    <source>
        <tissue>Blood</tissue>
    </source>
</reference>
<reference key="3">
    <citation type="journal article" date="2005" name="Genome Biol.">
        <title>Full-length cDNAs from chicken bursal lymphocytes to facilitate gene function analysis.</title>
        <authorList>
            <person name="Caldwell R.B."/>
            <person name="Kierzek A.M."/>
            <person name="Arakawa H."/>
            <person name="Bezzubov Y."/>
            <person name="Zaim J."/>
            <person name="Fiedler P."/>
            <person name="Kutter S."/>
            <person name="Blagodatski A."/>
            <person name="Kostovska D."/>
            <person name="Koter M."/>
            <person name="Plachy J."/>
            <person name="Carninci P."/>
            <person name="Hayashizaki Y."/>
            <person name="Buerstedde J.-M."/>
        </authorList>
    </citation>
    <scope>NUCLEOTIDE SEQUENCE [LARGE SCALE MRNA] (ISOFORM 2)</scope>
    <source>
        <strain>CB</strain>
        <tissue>Bursa of Fabricius</tissue>
    </source>
</reference>
<protein>
    <recommendedName>
        <fullName evidence="2">Cytosolic 5'-nucleotidase 3A</fullName>
        <ecNumber evidence="2">3.1.3.5</ecNumber>
    </recommendedName>
    <alternativeName>
        <fullName evidence="2">7-methylguanosine phosphate-specific 5'-nucleotidase</fullName>
        <shortName>7-methylguanosine nucleotidase</shortName>
        <ecNumber evidence="2">3.1.3.91</ecNumber>
    </alternativeName>
    <alternativeName>
        <fullName>Cytosolic 5'-nucleotidase 3</fullName>
    </alternativeName>
    <alternativeName>
        <fullName>Cytosolic 5'-nucleotidase III</fullName>
        <shortName>cN-III</shortName>
    </alternativeName>
    <alternativeName>
        <fullName>Pyrimidine 5'-nucleotidase 1</fullName>
        <shortName>P5'N-1</shortName>
        <shortName>P5N-1</shortName>
        <shortName>PN-I</shortName>
    </alternativeName>
</protein>
<organism>
    <name type="scientific">Gallus gallus</name>
    <name type="common">Chicken</name>
    <dbReference type="NCBI Taxonomy" id="9031"/>
    <lineage>
        <taxon>Eukaryota</taxon>
        <taxon>Metazoa</taxon>
        <taxon>Chordata</taxon>
        <taxon>Craniata</taxon>
        <taxon>Vertebrata</taxon>
        <taxon>Euteleostomi</taxon>
        <taxon>Archelosauria</taxon>
        <taxon>Archosauria</taxon>
        <taxon>Dinosauria</taxon>
        <taxon>Saurischia</taxon>
        <taxon>Theropoda</taxon>
        <taxon>Coelurosauria</taxon>
        <taxon>Aves</taxon>
        <taxon>Neognathae</taxon>
        <taxon>Galloanserae</taxon>
        <taxon>Galliformes</taxon>
        <taxon>Phasianidae</taxon>
        <taxon>Phasianinae</taxon>
        <taxon>Gallus</taxon>
    </lineage>
</organism>
<name>5NT3A_CHICK</name>
<evidence type="ECO:0000250" key="1">
    <source>
        <dbReference type="UniProtKB" id="Q9D020"/>
    </source>
</evidence>
<evidence type="ECO:0000250" key="2">
    <source>
        <dbReference type="UniProtKB" id="Q9H0P0"/>
    </source>
</evidence>
<evidence type="ECO:0000250" key="3">
    <source>
        <dbReference type="UniProtKB" id="Q9W197"/>
    </source>
</evidence>
<evidence type="ECO:0000269" key="4">
    <source>
    </source>
</evidence>
<evidence type="ECO:0000303" key="5">
    <source>
    </source>
</evidence>
<evidence type="ECO:0000303" key="6">
    <source ref="2"/>
</evidence>
<evidence type="ECO:0000305" key="7"/>
<keyword id="KW-0025">Alternative splicing</keyword>
<keyword id="KW-0963">Cytoplasm</keyword>
<keyword id="KW-0903">Direct protein sequencing</keyword>
<keyword id="KW-0378">Hydrolase</keyword>
<keyword id="KW-0460">Magnesium</keyword>
<keyword id="KW-0479">Metal-binding</keyword>
<keyword id="KW-0546">Nucleotide metabolism</keyword>
<keyword id="KW-0547">Nucleotide-binding</keyword>
<keyword id="KW-1185">Reference proteome</keyword>
<keyword id="KW-0808">Transferase</keyword>
<sequence length="331" mass="37370">MDRAAVAKMGAVASASVCALVGGVVLAQYIFTMKKKTGRKTKIIEMMPEFQKKTVHIKDPGRVEEIICGLIKGGAAKLQIITDFDMTLSRFSYNGKRCPTCHNIIDNSKLITEECRKKLLQLKETYYAIEIDPALTIEEKYPYMVEWYNKSHALLIEQGLQKDKLAEVVRESDVMLKEGYENFFDKLSEHNIPVFIFSAGIGDILEEVIHQAGVYHSNVKVVSNFMDFDENGILKGFKGELIHVYNKHDGALKNTEYFKQLKDNSNIILLGDSQGDLSMADGVANVEHILKIGYLNDKVDELLEKYMDSYDIVLVKDESLEVANSILQKIL</sequence>
<feature type="chain" id="PRO_0000064386" description="Cytosolic 5'-nucleotidase 3A">
    <location>
        <begin position="1"/>
        <end position="331"/>
    </location>
</feature>
<feature type="active site" description="Nucleophile" evidence="1">
    <location>
        <position position="83"/>
    </location>
</feature>
<feature type="active site" description="Proton donor" evidence="1">
    <location>
        <position position="85"/>
    </location>
</feature>
<feature type="binding site" evidence="1">
    <location>
        <position position="83"/>
    </location>
    <ligand>
        <name>Mg(2+)</name>
        <dbReference type="ChEBI" id="CHEBI:18420"/>
    </ligand>
</feature>
<feature type="binding site" evidence="1">
    <location>
        <position position="85"/>
    </location>
    <ligand>
        <name>Mg(2+)</name>
        <dbReference type="ChEBI" id="CHEBI:18420"/>
    </ligand>
</feature>
<feature type="binding site" evidence="3">
    <location>
        <position position="130"/>
    </location>
    <ligand>
        <name>CMP</name>
        <dbReference type="ChEBI" id="CHEBI:60377"/>
    </ligand>
</feature>
<feature type="binding site" evidence="3">
    <location>
        <position position="130"/>
    </location>
    <ligand>
        <name>N(7)-methyl-GMP</name>
        <dbReference type="ChEBI" id="CHEBI:58285"/>
    </ligand>
</feature>
<feature type="binding site" evidence="3">
    <location>
        <position position="151"/>
    </location>
    <ligand>
        <name>N(7)-methyl-GMP</name>
        <dbReference type="ChEBI" id="CHEBI:58285"/>
    </ligand>
</feature>
<feature type="binding site" evidence="1">
    <location>
        <begin position="198"/>
        <end position="199"/>
    </location>
    <ligand>
        <name>substrate</name>
    </ligand>
</feature>
<feature type="binding site" evidence="1">
    <location>
        <position position="247"/>
    </location>
    <ligand>
        <name>substrate</name>
    </ligand>
</feature>
<feature type="binding site" evidence="1">
    <location>
        <position position="272"/>
    </location>
    <ligand>
        <name>Mg(2+)</name>
        <dbReference type="ChEBI" id="CHEBI:18420"/>
    </ligand>
</feature>
<feature type="splice variant" id="VSP_021564" description="In isoform 1." evidence="5 6">
    <location>
        <begin position="1"/>
        <end position="46"/>
    </location>
</feature>